<feature type="signal peptide" evidence="2">
    <location>
        <begin position="1"/>
        <end position="23"/>
    </location>
</feature>
<feature type="chain" id="PRO_0000365524" description="Germin-like protein 8-12">
    <location>
        <begin position="24"/>
        <end position="224"/>
    </location>
</feature>
<feature type="domain" description="Cupin type-1" evidence="2">
    <location>
        <begin position="60"/>
        <end position="213"/>
    </location>
</feature>
<feature type="binding site" evidence="1">
    <location>
        <position position="111"/>
    </location>
    <ligand>
        <name>Mn(2+)</name>
        <dbReference type="ChEBI" id="CHEBI:29035"/>
    </ligand>
</feature>
<feature type="binding site" evidence="1">
    <location>
        <position position="113"/>
    </location>
    <ligand>
        <name>Mn(2+)</name>
        <dbReference type="ChEBI" id="CHEBI:29035"/>
    </ligand>
</feature>
<feature type="binding site" evidence="1">
    <location>
        <position position="118"/>
    </location>
    <ligand>
        <name>Mn(2+)</name>
        <dbReference type="ChEBI" id="CHEBI:29035"/>
    </ligand>
</feature>
<feature type="binding site" evidence="1">
    <location>
        <position position="158"/>
    </location>
    <ligand>
        <name>Mn(2+)</name>
        <dbReference type="ChEBI" id="CHEBI:29035"/>
    </ligand>
</feature>
<feature type="glycosylation site" description="N-linked (GlcNAc...) asparagine" evidence="2">
    <location>
        <position position="78"/>
    </location>
</feature>
<feature type="disulfide bond" evidence="1">
    <location>
        <begin position="33"/>
        <end position="48"/>
    </location>
</feature>
<evidence type="ECO:0000250" key="1"/>
<evidence type="ECO:0000255" key="2"/>
<evidence type="ECO:0000269" key="3">
    <source>
    </source>
</evidence>
<evidence type="ECO:0000305" key="4"/>
<keyword id="KW-0052">Apoplast</keyword>
<keyword id="KW-1015">Disulfide bond</keyword>
<keyword id="KW-0325">Glycoprotein</keyword>
<keyword id="KW-0464">Manganese</keyword>
<keyword id="KW-0479">Metal-binding</keyword>
<keyword id="KW-1185">Reference proteome</keyword>
<keyword id="KW-0964">Secreted</keyword>
<keyword id="KW-0732">Signal</keyword>
<dbReference type="EMBL" id="AP004559">
    <property type="protein sequence ID" value="BAD01255.1"/>
    <property type="molecule type" value="Genomic_DNA"/>
</dbReference>
<dbReference type="EMBL" id="AP008214">
    <property type="protein sequence ID" value="BAF23217.1"/>
    <property type="molecule type" value="Genomic_DNA"/>
</dbReference>
<dbReference type="EMBL" id="AP014964">
    <property type="protein sequence ID" value="BAT04433.1"/>
    <property type="molecule type" value="Genomic_DNA"/>
</dbReference>
<dbReference type="EMBL" id="CM000145">
    <property type="protein sequence ID" value="EAZ41952.1"/>
    <property type="molecule type" value="Genomic_DNA"/>
</dbReference>
<dbReference type="EMBL" id="AK059812">
    <property type="protein sequence ID" value="BAG87142.1"/>
    <property type="molecule type" value="mRNA"/>
</dbReference>
<dbReference type="RefSeq" id="XP_015648080.1">
    <property type="nucleotide sequence ID" value="XM_015792594.1"/>
</dbReference>
<dbReference type="SMR" id="Q6ZCR3"/>
<dbReference type="FunCoup" id="Q6ZCR3">
    <property type="interactions" value="42"/>
</dbReference>
<dbReference type="STRING" id="39947.Q6ZCR3"/>
<dbReference type="PaxDb" id="39947-Q6ZCR3"/>
<dbReference type="EnsemblPlants" id="Os08t0231400-01">
    <property type="protein sequence ID" value="Os08t0231400-01"/>
    <property type="gene ID" value="Os08g0231400"/>
</dbReference>
<dbReference type="Gramene" id="Os08t0231400-01">
    <property type="protein sequence ID" value="Os08t0231400-01"/>
    <property type="gene ID" value="Os08g0231400"/>
</dbReference>
<dbReference type="KEGG" id="dosa:Os08g0231400"/>
<dbReference type="eggNOG" id="ENOG502QQ4A">
    <property type="taxonomic scope" value="Eukaryota"/>
</dbReference>
<dbReference type="HOGENOM" id="CLU_015790_0_0_1"/>
<dbReference type="InParanoid" id="Q6ZCR3"/>
<dbReference type="OMA" id="LDYPPHS"/>
<dbReference type="OrthoDB" id="1921208at2759"/>
<dbReference type="Proteomes" id="UP000000763">
    <property type="component" value="Chromosome 8"/>
</dbReference>
<dbReference type="Proteomes" id="UP000007752">
    <property type="component" value="Chromosome 8"/>
</dbReference>
<dbReference type="Proteomes" id="UP000059680">
    <property type="component" value="Chromosome 8"/>
</dbReference>
<dbReference type="GO" id="GO:0048046">
    <property type="term" value="C:apoplast"/>
    <property type="evidence" value="ECO:0007669"/>
    <property type="project" value="UniProtKB-SubCell"/>
</dbReference>
<dbReference type="GO" id="GO:0030145">
    <property type="term" value="F:manganese ion binding"/>
    <property type="evidence" value="ECO:0007669"/>
    <property type="project" value="InterPro"/>
</dbReference>
<dbReference type="CDD" id="cd02241">
    <property type="entry name" value="cupin_OxOx"/>
    <property type="match status" value="1"/>
</dbReference>
<dbReference type="FunFam" id="2.60.120.10:FF:000005">
    <property type="entry name" value="Germin-like protein subfamily 1 member 8"/>
    <property type="match status" value="1"/>
</dbReference>
<dbReference type="Gene3D" id="2.60.120.10">
    <property type="entry name" value="Jelly Rolls"/>
    <property type="match status" value="1"/>
</dbReference>
<dbReference type="InterPro" id="IPR006045">
    <property type="entry name" value="Cupin_1"/>
</dbReference>
<dbReference type="InterPro" id="IPR001929">
    <property type="entry name" value="Germin"/>
</dbReference>
<dbReference type="InterPro" id="IPR019780">
    <property type="entry name" value="Germin_Mn-BS"/>
</dbReference>
<dbReference type="InterPro" id="IPR014710">
    <property type="entry name" value="RmlC-like_jellyroll"/>
</dbReference>
<dbReference type="InterPro" id="IPR011051">
    <property type="entry name" value="RmlC_Cupin_sf"/>
</dbReference>
<dbReference type="PANTHER" id="PTHR31238">
    <property type="entry name" value="GERMIN-LIKE PROTEIN SUBFAMILY 3 MEMBER 3"/>
    <property type="match status" value="1"/>
</dbReference>
<dbReference type="Pfam" id="PF00190">
    <property type="entry name" value="Cupin_1"/>
    <property type="match status" value="1"/>
</dbReference>
<dbReference type="PRINTS" id="PR00325">
    <property type="entry name" value="GERMIN"/>
</dbReference>
<dbReference type="SMART" id="SM00835">
    <property type="entry name" value="Cupin_1"/>
    <property type="match status" value="1"/>
</dbReference>
<dbReference type="SUPFAM" id="SSF51182">
    <property type="entry name" value="RmlC-like cupins"/>
    <property type="match status" value="1"/>
</dbReference>
<dbReference type="PROSITE" id="PS00725">
    <property type="entry name" value="GERMIN"/>
    <property type="match status" value="1"/>
</dbReference>
<gene>
    <name type="ordered locus">Os08g0231400</name>
    <name type="ordered locus">LOC_Os08g13440</name>
    <name type="ORF">OsJ_025435</name>
    <name type="ORF">P0461A06.15</name>
</gene>
<comment type="function">
    <text evidence="3">Plays a role in broad-spectrum disease resistance. Probably has no oxalate oxidase activity even if the active site is conserved.</text>
</comment>
<comment type="subunit">
    <text evidence="1">Oligomer (believed to be a pentamer but probably hexamer).</text>
</comment>
<comment type="subcellular location">
    <subcellularLocation>
        <location evidence="1">Secreted</location>
        <location evidence="1">Extracellular space</location>
        <location evidence="1">Apoplast</location>
    </subcellularLocation>
</comment>
<comment type="miscellaneous">
    <text>Member of the 12 germin-like protein gene cluster located on chromosome 8 in the major-effect quantitative trait loci (QTL) for fungal blast resistance. Partial suppression of the 12 germin-like protein genes increases susceptibility to the fungal pathogens causing rice blast and sheath blight diseases.</text>
</comment>
<comment type="similarity">
    <text evidence="4">Belongs to the germin family.</text>
</comment>
<name>GL812_ORYSJ</name>
<sequence>MASSSLFLLGALLVLASWQAIVAYDPSPLQDFCVADMNSPVRVNGFACKNPMDVSSEDFFNAAKFDMPRNTFNKLGSNVTNLNVMEFPGLNTLGISLARIDYAPMGVNPPHIHPRATELLTVLEGTLYVGFVTSNPNKLFSKVVCKGDVFVFPKAMIHFQMNLDHDKPAVAQSALSSQNPGVITIASAVFGSQPPISDDVLTKAFQVEKKLIDWLQSQFWENNY</sequence>
<protein>
    <recommendedName>
        <fullName>Germin-like protein 8-12</fullName>
    </recommendedName>
</protein>
<accession>Q6ZCR3</accession>
<accession>A0A0P0XD47</accession>
<reference key="1">
    <citation type="journal article" date="2005" name="Nature">
        <title>The map-based sequence of the rice genome.</title>
        <authorList>
            <consortium name="International rice genome sequencing project (IRGSP)"/>
        </authorList>
    </citation>
    <scope>NUCLEOTIDE SEQUENCE [LARGE SCALE GENOMIC DNA]</scope>
    <source>
        <strain>cv. Nipponbare</strain>
    </source>
</reference>
<reference key="2">
    <citation type="journal article" date="2008" name="Nucleic Acids Res.">
        <title>The rice annotation project database (RAP-DB): 2008 update.</title>
        <authorList>
            <consortium name="The rice annotation project (RAP)"/>
        </authorList>
    </citation>
    <scope>GENOME REANNOTATION</scope>
    <source>
        <strain>cv. Nipponbare</strain>
    </source>
</reference>
<reference key="3">
    <citation type="journal article" date="2013" name="Rice">
        <title>Improvement of the Oryza sativa Nipponbare reference genome using next generation sequence and optical map data.</title>
        <authorList>
            <person name="Kawahara Y."/>
            <person name="de la Bastide M."/>
            <person name="Hamilton J.P."/>
            <person name="Kanamori H."/>
            <person name="McCombie W.R."/>
            <person name="Ouyang S."/>
            <person name="Schwartz D.C."/>
            <person name="Tanaka T."/>
            <person name="Wu J."/>
            <person name="Zhou S."/>
            <person name="Childs K.L."/>
            <person name="Davidson R.M."/>
            <person name="Lin H."/>
            <person name="Quesada-Ocampo L."/>
            <person name="Vaillancourt B."/>
            <person name="Sakai H."/>
            <person name="Lee S.S."/>
            <person name="Kim J."/>
            <person name="Numa H."/>
            <person name="Itoh T."/>
            <person name="Buell C.R."/>
            <person name="Matsumoto T."/>
        </authorList>
    </citation>
    <scope>GENOME REANNOTATION</scope>
    <source>
        <strain>cv. Nipponbare</strain>
    </source>
</reference>
<reference key="4">
    <citation type="journal article" date="2005" name="PLoS Biol.">
        <title>The genomes of Oryza sativa: a history of duplications.</title>
        <authorList>
            <person name="Yu J."/>
            <person name="Wang J."/>
            <person name="Lin W."/>
            <person name="Li S."/>
            <person name="Li H."/>
            <person name="Zhou J."/>
            <person name="Ni P."/>
            <person name="Dong W."/>
            <person name="Hu S."/>
            <person name="Zeng C."/>
            <person name="Zhang J."/>
            <person name="Zhang Y."/>
            <person name="Li R."/>
            <person name="Xu Z."/>
            <person name="Li S."/>
            <person name="Li X."/>
            <person name="Zheng H."/>
            <person name="Cong L."/>
            <person name="Lin L."/>
            <person name="Yin J."/>
            <person name="Geng J."/>
            <person name="Li G."/>
            <person name="Shi J."/>
            <person name="Liu J."/>
            <person name="Lv H."/>
            <person name="Li J."/>
            <person name="Wang J."/>
            <person name="Deng Y."/>
            <person name="Ran L."/>
            <person name="Shi X."/>
            <person name="Wang X."/>
            <person name="Wu Q."/>
            <person name="Li C."/>
            <person name="Ren X."/>
            <person name="Wang J."/>
            <person name="Wang X."/>
            <person name="Li D."/>
            <person name="Liu D."/>
            <person name="Zhang X."/>
            <person name="Ji Z."/>
            <person name="Zhao W."/>
            <person name="Sun Y."/>
            <person name="Zhang Z."/>
            <person name="Bao J."/>
            <person name="Han Y."/>
            <person name="Dong L."/>
            <person name="Ji J."/>
            <person name="Chen P."/>
            <person name="Wu S."/>
            <person name="Liu J."/>
            <person name="Xiao Y."/>
            <person name="Bu D."/>
            <person name="Tan J."/>
            <person name="Yang L."/>
            <person name="Ye C."/>
            <person name="Zhang J."/>
            <person name="Xu J."/>
            <person name="Zhou Y."/>
            <person name="Yu Y."/>
            <person name="Zhang B."/>
            <person name="Zhuang S."/>
            <person name="Wei H."/>
            <person name="Liu B."/>
            <person name="Lei M."/>
            <person name="Yu H."/>
            <person name="Li Y."/>
            <person name="Xu H."/>
            <person name="Wei S."/>
            <person name="He X."/>
            <person name="Fang L."/>
            <person name="Zhang Z."/>
            <person name="Zhang Y."/>
            <person name="Huang X."/>
            <person name="Su Z."/>
            <person name="Tong W."/>
            <person name="Li J."/>
            <person name="Tong Z."/>
            <person name="Li S."/>
            <person name="Ye J."/>
            <person name="Wang L."/>
            <person name="Fang L."/>
            <person name="Lei T."/>
            <person name="Chen C.-S."/>
            <person name="Chen H.-C."/>
            <person name="Xu Z."/>
            <person name="Li H."/>
            <person name="Huang H."/>
            <person name="Zhang F."/>
            <person name="Xu H."/>
            <person name="Li N."/>
            <person name="Zhao C."/>
            <person name="Li S."/>
            <person name="Dong L."/>
            <person name="Huang Y."/>
            <person name="Li L."/>
            <person name="Xi Y."/>
            <person name="Qi Q."/>
            <person name="Li W."/>
            <person name="Zhang B."/>
            <person name="Hu W."/>
            <person name="Zhang Y."/>
            <person name="Tian X."/>
            <person name="Jiao Y."/>
            <person name="Liang X."/>
            <person name="Jin J."/>
            <person name="Gao L."/>
            <person name="Zheng W."/>
            <person name="Hao B."/>
            <person name="Liu S.-M."/>
            <person name="Wang W."/>
            <person name="Yuan L."/>
            <person name="Cao M."/>
            <person name="McDermott J."/>
            <person name="Samudrala R."/>
            <person name="Wang J."/>
            <person name="Wong G.K.-S."/>
            <person name="Yang H."/>
        </authorList>
    </citation>
    <scope>NUCLEOTIDE SEQUENCE [LARGE SCALE GENOMIC DNA]</scope>
    <source>
        <strain>cv. Nipponbare</strain>
    </source>
</reference>
<reference key="5">
    <citation type="journal article" date="2003" name="Science">
        <title>Collection, mapping, and annotation of over 28,000 cDNA clones from japonica rice.</title>
        <authorList>
            <consortium name="The rice full-length cDNA consortium"/>
        </authorList>
    </citation>
    <scope>NUCLEOTIDE SEQUENCE [LARGE SCALE MRNA]</scope>
    <source>
        <strain>cv. Nipponbare</strain>
    </source>
</reference>
<reference key="6">
    <citation type="journal article" date="2009" name="Plant Physiol.">
        <title>A germin-like protein gene family functions as a complex quantitative trait locus conferring broad-spectrum disease resistance in rice.</title>
        <authorList>
            <person name="Manosalva P.M."/>
            <person name="Davidson R.M."/>
            <person name="Liu B."/>
            <person name="Zhu X."/>
            <person name="Hulbert S.H."/>
            <person name="Leung H."/>
            <person name="Leach J.E."/>
        </authorList>
    </citation>
    <scope>FUNCTION</scope>
</reference>
<proteinExistence type="evidence at transcript level"/>
<organism>
    <name type="scientific">Oryza sativa subsp. japonica</name>
    <name type="common">Rice</name>
    <dbReference type="NCBI Taxonomy" id="39947"/>
    <lineage>
        <taxon>Eukaryota</taxon>
        <taxon>Viridiplantae</taxon>
        <taxon>Streptophyta</taxon>
        <taxon>Embryophyta</taxon>
        <taxon>Tracheophyta</taxon>
        <taxon>Spermatophyta</taxon>
        <taxon>Magnoliopsida</taxon>
        <taxon>Liliopsida</taxon>
        <taxon>Poales</taxon>
        <taxon>Poaceae</taxon>
        <taxon>BOP clade</taxon>
        <taxon>Oryzoideae</taxon>
        <taxon>Oryzeae</taxon>
        <taxon>Oryzinae</taxon>
        <taxon>Oryza</taxon>
        <taxon>Oryza sativa</taxon>
    </lineage>
</organism>